<protein>
    <recommendedName>
        <fullName evidence="1">3-isopropylmalate dehydratase small subunit</fullName>
        <ecNumber evidence="1">4.2.1.33</ecNumber>
    </recommendedName>
    <alternativeName>
        <fullName evidence="1">Alpha-IPM isomerase</fullName>
        <shortName evidence="1">IPMI</shortName>
    </alternativeName>
    <alternativeName>
        <fullName evidence="1">Isopropylmalate isomerase</fullName>
    </alternativeName>
</protein>
<comment type="function">
    <text evidence="1">Catalyzes the isomerization between 2-isopropylmalate and 3-isopropylmalate, via the formation of 2-isopropylmaleate.</text>
</comment>
<comment type="catalytic activity">
    <reaction evidence="1">
        <text>(2R,3S)-3-isopropylmalate = (2S)-2-isopropylmalate</text>
        <dbReference type="Rhea" id="RHEA:32287"/>
        <dbReference type="ChEBI" id="CHEBI:1178"/>
        <dbReference type="ChEBI" id="CHEBI:35121"/>
        <dbReference type="EC" id="4.2.1.33"/>
    </reaction>
</comment>
<comment type="pathway">
    <text evidence="1">Amino-acid biosynthesis; L-leucine biosynthesis; L-leucine from 3-methyl-2-oxobutanoate: step 2/4.</text>
</comment>
<comment type="subunit">
    <text evidence="1">Heterodimer of LeuC and LeuD.</text>
</comment>
<comment type="similarity">
    <text evidence="1">Belongs to the LeuD family. LeuD type 1 subfamily.</text>
</comment>
<keyword id="KW-0028">Amino-acid biosynthesis</keyword>
<keyword id="KW-0100">Branched-chain amino acid biosynthesis</keyword>
<keyword id="KW-0432">Leucine biosynthesis</keyword>
<keyword id="KW-0456">Lyase</keyword>
<keyword id="KW-1185">Reference proteome</keyword>
<organism>
    <name type="scientific">Ralstonia nicotianae (strain ATCC BAA-1114 / GMI1000)</name>
    <name type="common">Ralstonia solanacearum</name>
    <dbReference type="NCBI Taxonomy" id="267608"/>
    <lineage>
        <taxon>Bacteria</taxon>
        <taxon>Pseudomonadati</taxon>
        <taxon>Pseudomonadota</taxon>
        <taxon>Betaproteobacteria</taxon>
        <taxon>Burkholderiales</taxon>
        <taxon>Burkholderiaceae</taxon>
        <taxon>Ralstonia</taxon>
        <taxon>Ralstonia solanacearum species complex</taxon>
    </lineage>
</organism>
<name>LEUD_RALN1</name>
<reference key="1">
    <citation type="journal article" date="2002" name="Nature">
        <title>Genome sequence of the plant pathogen Ralstonia solanacearum.</title>
        <authorList>
            <person name="Salanoubat M."/>
            <person name="Genin S."/>
            <person name="Artiguenave F."/>
            <person name="Gouzy J."/>
            <person name="Mangenot S."/>
            <person name="Arlat M."/>
            <person name="Billault A."/>
            <person name="Brottier P."/>
            <person name="Camus J.-C."/>
            <person name="Cattolico L."/>
            <person name="Chandler M."/>
            <person name="Choisne N."/>
            <person name="Claudel-Renard C."/>
            <person name="Cunnac S."/>
            <person name="Demange N."/>
            <person name="Gaspin C."/>
            <person name="Lavie M."/>
            <person name="Moisan A."/>
            <person name="Robert C."/>
            <person name="Saurin W."/>
            <person name="Schiex T."/>
            <person name="Siguier P."/>
            <person name="Thebault P."/>
            <person name="Whalen M."/>
            <person name="Wincker P."/>
            <person name="Levy M."/>
            <person name="Weissenbach J."/>
            <person name="Boucher C.A."/>
        </authorList>
    </citation>
    <scope>NUCLEOTIDE SEQUENCE [LARGE SCALE GENOMIC DNA]</scope>
    <source>
        <strain>ATCC BAA-1114 / GMI1000</strain>
    </source>
</reference>
<proteinExistence type="inferred from homology"/>
<feature type="chain" id="PRO_0000141866" description="3-isopropylmalate dehydratase small subunit">
    <location>
        <begin position="1"/>
        <end position="216"/>
    </location>
</feature>
<accession>Q8XXX4</accession>
<sequence length="216" mass="24410">MEQFTIHTGLVAPLDRENVDTDAIIPKQFLKSIKRTGFGPNLFDEWRYKDVGEPGQDNSKRPLNPDFVLNQPRYQGASVLLARKNFGCGSSREHAPWALQQYGFRAIIAPSFADIFFNNCFKNGLLPIVLTESQVDHLFNETQAFTGYQLTVDLDKQVVVTPGGTAYPFDVTAFRKYCLLNGFDDIGLTLRYADQIKAYEAQRLAKMPWLAHKLVG</sequence>
<dbReference type="EC" id="4.2.1.33" evidence="1"/>
<dbReference type="EMBL" id="AL646052">
    <property type="protein sequence ID" value="CAD15691.1"/>
    <property type="molecule type" value="Genomic_DNA"/>
</dbReference>
<dbReference type="RefSeq" id="WP_011001925.1">
    <property type="nucleotide sequence ID" value="NC_003295.1"/>
</dbReference>
<dbReference type="SMR" id="Q8XXX4"/>
<dbReference type="STRING" id="267608.RSc1989"/>
<dbReference type="EnsemblBacteria" id="CAD15691">
    <property type="protein sequence ID" value="CAD15691"/>
    <property type="gene ID" value="RSc1989"/>
</dbReference>
<dbReference type="KEGG" id="rso:RSc1989"/>
<dbReference type="eggNOG" id="COG0066">
    <property type="taxonomic scope" value="Bacteria"/>
</dbReference>
<dbReference type="HOGENOM" id="CLU_081378_0_3_4"/>
<dbReference type="UniPathway" id="UPA00048">
    <property type="reaction ID" value="UER00071"/>
</dbReference>
<dbReference type="Proteomes" id="UP000001436">
    <property type="component" value="Chromosome"/>
</dbReference>
<dbReference type="GO" id="GO:0009316">
    <property type="term" value="C:3-isopropylmalate dehydratase complex"/>
    <property type="evidence" value="ECO:0007669"/>
    <property type="project" value="InterPro"/>
</dbReference>
<dbReference type="GO" id="GO:0003861">
    <property type="term" value="F:3-isopropylmalate dehydratase activity"/>
    <property type="evidence" value="ECO:0007669"/>
    <property type="project" value="UniProtKB-UniRule"/>
</dbReference>
<dbReference type="GO" id="GO:0009098">
    <property type="term" value="P:L-leucine biosynthetic process"/>
    <property type="evidence" value="ECO:0007669"/>
    <property type="project" value="UniProtKB-UniRule"/>
</dbReference>
<dbReference type="CDD" id="cd01577">
    <property type="entry name" value="IPMI_Swivel"/>
    <property type="match status" value="1"/>
</dbReference>
<dbReference type="FunFam" id="3.20.19.10:FF:000003">
    <property type="entry name" value="3-isopropylmalate dehydratase small subunit"/>
    <property type="match status" value="1"/>
</dbReference>
<dbReference type="Gene3D" id="3.20.19.10">
    <property type="entry name" value="Aconitase, domain 4"/>
    <property type="match status" value="1"/>
</dbReference>
<dbReference type="HAMAP" id="MF_01031">
    <property type="entry name" value="LeuD_type1"/>
    <property type="match status" value="1"/>
</dbReference>
<dbReference type="InterPro" id="IPR004431">
    <property type="entry name" value="3-IsopropMal_deHydase_ssu"/>
</dbReference>
<dbReference type="InterPro" id="IPR015928">
    <property type="entry name" value="Aconitase/3IPM_dehydase_swvl"/>
</dbReference>
<dbReference type="InterPro" id="IPR000573">
    <property type="entry name" value="AconitaseA/IPMdHydase_ssu_swvl"/>
</dbReference>
<dbReference type="InterPro" id="IPR033940">
    <property type="entry name" value="IPMI_Swivel"/>
</dbReference>
<dbReference type="InterPro" id="IPR050075">
    <property type="entry name" value="LeuD"/>
</dbReference>
<dbReference type="NCBIfam" id="TIGR00171">
    <property type="entry name" value="leuD"/>
    <property type="match status" value="1"/>
</dbReference>
<dbReference type="NCBIfam" id="NF002458">
    <property type="entry name" value="PRK01641.1"/>
    <property type="match status" value="1"/>
</dbReference>
<dbReference type="PANTHER" id="PTHR43345:SF5">
    <property type="entry name" value="3-ISOPROPYLMALATE DEHYDRATASE SMALL SUBUNIT"/>
    <property type="match status" value="1"/>
</dbReference>
<dbReference type="PANTHER" id="PTHR43345">
    <property type="entry name" value="3-ISOPROPYLMALATE DEHYDRATASE SMALL SUBUNIT 2-RELATED-RELATED"/>
    <property type="match status" value="1"/>
</dbReference>
<dbReference type="Pfam" id="PF00694">
    <property type="entry name" value="Aconitase_C"/>
    <property type="match status" value="1"/>
</dbReference>
<dbReference type="SUPFAM" id="SSF52016">
    <property type="entry name" value="LeuD/IlvD-like"/>
    <property type="match status" value="1"/>
</dbReference>
<gene>
    <name evidence="1" type="primary">leuD</name>
    <name type="ordered locus">RSc1989</name>
    <name type="ORF">RS03557</name>
</gene>
<evidence type="ECO:0000255" key="1">
    <source>
        <dbReference type="HAMAP-Rule" id="MF_01031"/>
    </source>
</evidence>